<protein>
    <recommendedName>
        <fullName>Syntrophin-1</fullName>
    </recommendedName>
</protein>
<evidence type="ECO:0000250" key="1"/>
<evidence type="ECO:0000255" key="2"/>
<evidence type="ECO:0000255" key="3">
    <source>
        <dbReference type="PROSITE-ProRule" id="PRU00143"/>
    </source>
</evidence>
<evidence type="ECO:0000255" key="4">
    <source>
        <dbReference type="PROSITE-ProRule" id="PRU00145"/>
    </source>
</evidence>
<evidence type="ECO:0000269" key="5">
    <source>
    </source>
</evidence>
<evidence type="ECO:0000269" key="6">
    <source>
    </source>
</evidence>
<evidence type="ECO:0000269" key="7">
    <source>
    </source>
</evidence>
<evidence type="ECO:0000269" key="8">
    <source>
    </source>
</evidence>
<evidence type="ECO:0000303" key="9">
    <source>
    </source>
</evidence>
<evidence type="ECO:0000305" key="10"/>
<evidence type="ECO:0000312" key="11">
    <source>
        <dbReference type="EMBL" id="CAB03025.1"/>
    </source>
</evidence>
<accession>Q93646</accession>
<accession>Q9XVP8</accession>
<feature type="chain" id="PRO_0000184017" description="Syntrophin-1">
    <location>
        <begin position="1"/>
        <end position="440"/>
    </location>
</feature>
<feature type="domain" description="PH 1" evidence="4">
    <location>
        <begin position="2"/>
        <end position="208"/>
    </location>
</feature>
<feature type="domain" description="PDZ" evidence="3">
    <location>
        <begin position="45"/>
        <end position="128"/>
    </location>
</feature>
<feature type="domain" description="PH 2" evidence="4">
    <location>
        <begin position="227"/>
        <end position="340"/>
    </location>
</feature>
<feature type="domain" description="SU" evidence="2">
    <location>
        <begin position="384"/>
        <end position="440"/>
    </location>
</feature>
<feature type="splice variant" id="VSP_051613" description="In isoform b." evidence="9">
    <original>ELDLLNSAKPVVFILHSFLATKVYRLGLYA</original>
    <variation>VKMDFILTLISYL</variation>
    <location>
        <begin position="411"/>
        <end position="440"/>
    </location>
</feature>
<reference evidence="10" key="1">
    <citation type="journal article" date="2003" name="J. Mol. Biol.">
        <title>The stn-1 syntrophin gene of C.elegans is functionally related to dystrophin and dystrobrevin.</title>
        <authorList>
            <person name="Grisoni K."/>
            <person name="Gieseler K."/>
            <person name="Mariol M.-C."/>
            <person name="Martin E."/>
            <person name="Carre-Pierrat M."/>
            <person name="Moulder G."/>
            <person name="Barstead R."/>
            <person name="Segalat L."/>
        </authorList>
    </citation>
    <scope>NUCLEOTIDE SEQUENCE [GENOMIC DNA] (ISOFORMS A AND B)</scope>
    <scope>FUNCTION</scope>
    <scope>TISSUE SPECIFICITY</scope>
    <scope>DEVELOPMENTAL STAGE</scope>
    <scope>INTERACTION WITH DYB-1</scope>
    <source>
        <strain evidence="7">Bristol N2</strain>
    </source>
</reference>
<reference evidence="11" key="2">
    <citation type="journal article" date="1998" name="Science">
        <title>Genome sequence of the nematode C. elegans: a platform for investigating biology.</title>
        <authorList>
            <consortium name="The C. elegans sequencing consortium"/>
        </authorList>
    </citation>
    <scope>NUCLEOTIDE SEQUENCE [LARGE SCALE GENOMIC DNA]</scope>
    <source>
        <strain evidence="11">Bristol N2</strain>
    </source>
</reference>
<reference evidence="10" key="3">
    <citation type="journal article" date="2002" name="Gene">
        <title>Genetic evidence for a dystrophin-glycoprotein complex (DGC) in Caenorhabditis elegans.</title>
        <authorList>
            <person name="Grisoni K."/>
            <person name="Martin E."/>
            <person name="Gieseler K."/>
            <person name="Mariol M.-C."/>
            <person name="Segalat L."/>
        </authorList>
    </citation>
    <scope>FUNCTION</scope>
</reference>
<reference evidence="10" key="4">
    <citation type="journal article" date="1999" name="FEBS Lett.">
        <title>In vitro interactions of Caenorhabditis elegans dystrophin with dystrobrevin and syntrophin.</title>
        <authorList>
            <person name="Gieseler K."/>
            <person name="Abdel-Dayem M."/>
            <person name="Segalat L."/>
        </authorList>
    </citation>
    <scope>INTERACTION WITH DYB-1 AND DYS-1</scope>
</reference>
<reference evidence="10" key="5">
    <citation type="journal article" date="2004" name="Nature">
        <title>SNF-6 is an acetylcholine transporter interacting with the dystrophin complex in Caenorhabditis elegans.</title>
        <authorList>
            <person name="Kim H."/>
            <person name="Rogers M.J."/>
            <person name="Richmond J.E."/>
            <person name="McIntire S.L."/>
        </authorList>
    </citation>
    <scope>INTERACTION WITH SNF-6</scope>
</reference>
<gene>
    <name evidence="9" type="primary">stn-1</name>
    <name type="ORF">F30A10.8</name>
</gene>
<sequence length="440" mass="49005">MAAVRSGLVDIFVQGQWHRVLATLDPTAITLQTMEQNEAEAEKRTVRVVKYDGNGLGISIKGGRDNNMPIVISKIFKGMAADQAGELFLDDVIISVNGENLLDASHEEAVRALKRAGRVVDLQVQYRREDMMHRENIVENVEWDDDIRERVRTIGLKLAYVARAGIDADAEGRILEMRSPSGRYSLAMRCSSSEEADGWFEALHACTTCLLTQALAQVNIMLGNNPQVRHMGWIAEQVSENGISMWKPKFMTLTNSEILFYEAVPQLKAEWAEPRLVRPLVATRVVQTSSRTAPVIKGLTDVISFRMRTGTQQGVRTHTIRVETHAELARWVRAVVIGGYEACLSTSQVSAPCLWRGESCELIVNLDNGISLLSSTGEVLWQHSFETIRATGDDGGRFLWVDFGPPHGEQELDLLNSAKPVVFILHSFLATKVYRLGLYA</sequence>
<organism>
    <name type="scientific">Caenorhabditis elegans</name>
    <dbReference type="NCBI Taxonomy" id="6239"/>
    <lineage>
        <taxon>Eukaryota</taxon>
        <taxon>Metazoa</taxon>
        <taxon>Ecdysozoa</taxon>
        <taxon>Nematoda</taxon>
        <taxon>Chromadorea</taxon>
        <taxon>Rhabditida</taxon>
        <taxon>Rhabditina</taxon>
        <taxon>Rhabditomorpha</taxon>
        <taxon>Rhabditoidea</taxon>
        <taxon>Rhabditidae</taxon>
        <taxon>Peloderinae</taxon>
        <taxon>Caenorhabditis</taxon>
    </lineage>
</organism>
<proteinExistence type="evidence at protein level"/>
<keyword id="KW-0025">Alternative splicing</keyword>
<keyword id="KW-0963">Cytoplasm</keyword>
<keyword id="KW-0206">Cytoskeleton</keyword>
<keyword id="KW-0472">Membrane</keyword>
<keyword id="KW-1185">Reference proteome</keyword>
<keyword id="KW-0677">Repeat</keyword>
<name>SNT1_CAEEL</name>
<comment type="function">
    <text evidence="6 7">Adapter protein that binds to and probably organizes the subcellular localization of a variety of membrane proteins. May link various receptors to the actin cytoskeleton and the dystrophin glycoprotein complex (DGC). May also act by slowing calcium channel activity via a direct or indirect mechanism potentially involving other second messengers. Plays an early role in the formation of the neuromuscular junction and is necessary for muscle maintenance.</text>
</comment>
<comment type="subunit">
    <text evidence="5 7 8">Component of the dystrophin glycoprotein complex (DGC). Interacts with dyb-1, dys-1 and snf-6 to form the DGC.</text>
</comment>
<comment type="interaction">
    <interactant intactId="EBI-447079">
        <id>Q93646</id>
    </interactant>
    <interactant intactId="EBI-447522">
        <id>O76689</id>
        <label>snf-6</label>
    </interactant>
    <organismsDiffer>false</organismsDiffer>
    <experiments>2</experiments>
</comment>
<comment type="subcellular location">
    <subcellularLocation>
        <location evidence="1">Membrane</location>
        <topology evidence="1">Peripheral membrane protein</topology>
    </subcellularLocation>
    <subcellularLocation>
        <location evidence="1">Cytoplasm</location>
        <location evidence="1">Cytoskeleton</location>
    </subcellularLocation>
</comment>
<comment type="alternative products">
    <event type="alternative splicing"/>
    <isoform>
        <id>Q93646-1</id>
        <name evidence="7">a</name>
        <name>Alpha</name>
        <sequence type="displayed"/>
    </isoform>
    <isoform>
        <id>Q93646-2</id>
        <name evidence="7">b</name>
        <name>Beta</name>
        <sequence type="described" ref="VSP_051613"/>
    </isoform>
</comment>
<comment type="tissue specificity">
    <text evidence="7">Expressed in neurons and muscles; particularly strong expression in the body wall, head and vulval muscles, and in ventral nerve cord (at protein level).</text>
</comment>
<comment type="developmental stage">
    <text evidence="7">Expressed both maternally and zygotically.</text>
</comment>
<comment type="similarity">
    <text evidence="7">Belongs to the syntrophin family.</text>
</comment>
<dbReference type="EMBL" id="Z81072">
    <property type="protein sequence ID" value="CAB03025.1"/>
    <property type="molecule type" value="Genomic_DNA"/>
</dbReference>
<dbReference type="EMBL" id="Z81072">
    <property type="protein sequence ID" value="CAB03028.1"/>
    <property type="molecule type" value="Genomic_DNA"/>
</dbReference>
<dbReference type="PIR" id="T21568">
    <property type="entry name" value="T21568"/>
</dbReference>
<dbReference type="PIR" id="T21570">
    <property type="entry name" value="T21570"/>
</dbReference>
<dbReference type="RefSeq" id="NP_492521.1">
    <molecule id="Q93646-1"/>
    <property type="nucleotide sequence ID" value="NM_060120.7"/>
</dbReference>
<dbReference type="SMR" id="Q93646"/>
<dbReference type="BioGRID" id="57332">
    <property type="interactions" value="17"/>
</dbReference>
<dbReference type="FunCoup" id="Q93646">
    <property type="interactions" value="532"/>
</dbReference>
<dbReference type="IntAct" id="Q93646">
    <property type="interactions" value="15"/>
</dbReference>
<dbReference type="STRING" id="6239.F30A10.8.1"/>
<dbReference type="PaxDb" id="6239-F30A10.8a"/>
<dbReference type="EnsemblMetazoa" id="F30A10.8.1">
    <molecule id="Q93646-1"/>
    <property type="protein sequence ID" value="F30A10.8.1"/>
    <property type="gene ID" value="WBGene00006062"/>
</dbReference>
<dbReference type="EnsemblMetazoa" id="F30A10.8.2">
    <molecule id="Q93646-1"/>
    <property type="protein sequence ID" value="F30A10.8.2"/>
    <property type="gene ID" value="WBGene00006062"/>
</dbReference>
<dbReference type="EnsemblMetazoa" id="F30A10.8.3">
    <molecule id="Q93646-1"/>
    <property type="protein sequence ID" value="F30A10.8.3"/>
    <property type="gene ID" value="WBGene00006062"/>
</dbReference>
<dbReference type="GeneID" id="266844"/>
<dbReference type="KEGG" id="cel:CELE_F30A10.8"/>
<dbReference type="UCSC" id="F30A10.8b">
    <molecule id="Q93646-1"/>
    <property type="organism name" value="c. elegans"/>
</dbReference>
<dbReference type="AGR" id="WB:WBGene00006062"/>
<dbReference type="CTD" id="266844"/>
<dbReference type="WormBase" id="F30A10.8">
    <molecule id="Q93646-1"/>
    <property type="protein sequence ID" value="CE09809"/>
    <property type="gene ID" value="WBGene00006062"/>
    <property type="gene designation" value="stn-1"/>
</dbReference>
<dbReference type="eggNOG" id="KOG3551">
    <property type="taxonomic scope" value="Eukaryota"/>
</dbReference>
<dbReference type="GeneTree" id="ENSGT00950000182863"/>
<dbReference type="HOGENOM" id="CLU_026406_1_0_1"/>
<dbReference type="InParanoid" id="Q93646"/>
<dbReference type="OMA" id="NPQVRKM"/>
<dbReference type="OrthoDB" id="409749at2759"/>
<dbReference type="PhylomeDB" id="Q93646"/>
<dbReference type="Reactome" id="R-CEL-9913351">
    <property type="pathway name" value="Formation of the dystrophin-glycoprotein complex (DGC)"/>
</dbReference>
<dbReference type="SignaLink" id="Q93646"/>
<dbReference type="PRO" id="PR:Q93646"/>
<dbReference type="Proteomes" id="UP000001940">
    <property type="component" value="Chromosome I"/>
</dbReference>
<dbReference type="Bgee" id="WBGene00006062">
    <property type="expression patterns" value="Expressed in pharyngeal muscle cell (C elegans) and 3 other cell types or tissues"/>
</dbReference>
<dbReference type="GO" id="GO:0005737">
    <property type="term" value="C:cytoplasm"/>
    <property type="evidence" value="ECO:0007669"/>
    <property type="project" value="UniProtKB-KW"/>
</dbReference>
<dbReference type="GO" id="GO:0005856">
    <property type="term" value="C:cytoskeleton"/>
    <property type="evidence" value="ECO:0007669"/>
    <property type="project" value="UniProtKB-SubCell"/>
</dbReference>
<dbReference type="GO" id="GO:0016010">
    <property type="term" value="C:dystrophin-associated glycoprotein complex"/>
    <property type="evidence" value="ECO:0000315"/>
    <property type="project" value="UniProtKB"/>
</dbReference>
<dbReference type="GO" id="GO:0005277">
    <property type="term" value="F:acetylcholine transmembrane transporter activity"/>
    <property type="evidence" value="ECO:0000315"/>
    <property type="project" value="UniProtKB"/>
</dbReference>
<dbReference type="GO" id="GO:0005246">
    <property type="term" value="F:calcium channel regulator activity"/>
    <property type="evidence" value="ECO:0000315"/>
    <property type="project" value="UniProtKB"/>
</dbReference>
<dbReference type="GO" id="GO:0005198">
    <property type="term" value="F:structural molecule activity"/>
    <property type="evidence" value="ECO:0007669"/>
    <property type="project" value="InterPro"/>
</dbReference>
<dbReference type="GO" id="GO:0015870">
    <property type="term" value="P:acetylcholine transport"/>
    <property type="evidence" value="ECO:0000315"/>
    <property type="project" value="UniProtKB"/>
</dbReference>
<dbReference type="GO" id="GO:0046716">
    <property type="term" value="P:muscle cell cellular homeostasis"/>
    <property type="evidence" value="ECO:0000315"/>
    <property type="project" value="UniProtKB"/>
</dbReference>
<dbReference type="GO" id="GO:0040013">
    <property type="term" value="P:negative regulation of locomotion"/>
    <property type="evidence" value="ECO:0000315"/>
    <property type="project" value="WormBase"/>
</dbReference>
<dbReference type="GO" id="GO:0007528">
    <property type="term" value="P:neuromuscular junction development"/>
    <property type="evidence" value="ECO:0000304"/>
    <property type="project" value="UniProtKB"/>
</dbReference>
<dbReference type="GO" id="GO:0040017">
    <property type="term" value="P:positive regulation of locomotion"/>
    <property type="evidence" value="ECO:0000315"/>
    <property type="project" value="UniProtKB"/>
</dbReference>
<dbReference type="GO" id="GO:0043058">
    <property type="term" value="P:regulation of backward locomotion"/>
    <property type="evidence" value="ECO:0000315"/>
    <property type="project" value="WormBase"/>
</dbReference>
<dbReference type="GO" id="GO:0046662">
    <property type="term" value="P:regulation of egg-laying behavior"/>
    <property type="evidence" value="ECO:0000315"/>
    <property type="project" value="WormBase"/>
</dbReference>
<dbReference type="GO" id="GO:0043059">
    <property type="term" value="P:regulation of forward locomotion"/>
    <property type="evidence" value="ECO:0000315"/>
    <property type="project" value="WormBase"/>
</dbReference>
<dbReference type="GO" id="GO:0045214">
    <property type="term" value="P:sarcomere organization"/>
    <property type="evidence" value="ECO:0000316"/>
    <property type="project" value="WormBase"/>
</dbReference>
<dbReference type="CDD" id="cd06801">
    <property type="entry name" value="PDZ_syntrophin-like"/>
    <property type="match status" value="1"/>
</dbReference>
<dbReference type="FunFam" id="2.30.29.30:FF:000553">
    <property type="entry name" value="Protein CBR-STN-1"/>
    <property type="match status" value="1"/>
</dbReference>
<dbReference type="FunFam" id="2.30.42.10:FF:000267">
    <property type="entry name" value="Protein CBR-STN-1"/>
    <property type="match status" value="1"/>
</dbReference>
<dbReference type="Gene3D" id="2.30.42.10">
    <property type="match status" value="1"/>
</dbReference>
<dbReference type="Gene3D" id="2.30.29.30">
    <property type="entry name" value="Pleckstrin-homology domain (PH domain)/Phosphotyrosine-binding domain (PTB)"/>
    <property type="match status" value="2"/>
</dbReference>
<dbReference type="InterPro" id="IPR001478">
    <property type="entry name" value="PDZ"/>
</dbReference>
<dbReference type="InterPro" id="IPR036034">
    <property type="entry name" value="PDZ_sf"/>
</dbReference>
<dbReference type="InterPro" id="IPR011993">
    <property type="entry name" value="PH-like_dom_sf"/>
</dbReference>
<dbReference type="InterPro" id="IPR001849">
    <property type="entry name" value="PH_domain"/>
</dbReference>
<dbReference type="InterPro" id="IPR041428">
    <property type="entry name" value="PHsplit_syntrophin"/>
</dbReference>
<dbReference type="InterPro" id="IPR015482">
    <property type="entry name" value="Syntrophin"/>
</dbReference>
<dbReference type="InterPro" id="IPR055108">
    <property type="entry name" value="Syntrophin_4th"/>
</dbReference>
<dbReference type="PANTHER" id="PTHR10554:SF12">
    <property type="entry name" value="IP02644P"/>
    <property type="match status" value="1"/>
</dbReference>
<dbReference type="PANTHER" id="PTHR10554">
    <property type="entry name" value="SYNTROPHIN"/>
    <property type="match status" value="1"/>
</dbReference>
<dbReference type="Pfam" id="PF00595">
    <property type="entry name" value="PDZ"/>
    <property type="match status" value="1"/>
</dbReference>
<dbReference type="Pfam" id="PF00169">
    <property type="entry name" value="PH"/>
    <property type="match status" value="1"/>
</dbReference>
<dbReference type="Pfam" id="PF18012">
    <property type="entry name" value="PH_17"/>
    <property type="match status" value="1"/>
</dbReference>
<dbReference type="Pfam" id="PF23012">
    <property type="entry name" value="Syntrophin_4th"/>
    <property type="match status" value="1"/>
</dbReference>
<dbReference type="SMART" id="SM00228">
    <property type="entry name" value="PDZ"/>
    <property type="match status" value="1"/>
</dbReference>
<dbReference type="SMART" id="SM00233">
    <property type="entry name" value="PH"/>
    <property type="match status" value="2"/>
</dbReference>
<dbReference type="SUPFAM" id="SSF50156">
    <property type="entry name" value="PDZ domain-like"/>
    <property type="match status" value="1"/>
</dbReference>
<dbReference type="SUPFAM" id="SSF50729">
    <property type="entry name" value="PH domain-like"/>
    <property type="match status" value="2"/>
</dbReference>
<dbReference type="PROSITE" id="PS50106">
    <property type="entry name" value="PDZ"/>
    <property type="match status" value="1"/>
</dbReference>
<dbReference type="PROSITE" id="PS50003">
    <property type="entry name" value="PH_DOMAIN"/>
    <property type="match status" value="1"/>
</dbReference>